<dbReference type="EC" id="1.14.11.-" evidence="1"/>
<dbReference type="EMBL" id="CP001011">
    <property type="protein sequence ID" value="ACB93045.1"/>
    <property type="molecule type" value="Genomic_DNA"/>
</dbReference>
<dbReference type="RefSeq" id="WP_004088698.1">
    <property type="nucleotide sequence ID" value="NC_010577.1"/>
</dbReference>
<dbReference type="SMR" id="B2I7E8"/>
<dbReference type="KEGG" id="xfn:XfasM23_1638"/>
<dbReference type="HOGENOM" id="CLU_106663_0_0_6"/>
<dbReference type="Proteomes" id="UP000001698">
    <property type="component" value="Chromosome"/>
</dbReference>
<dbReference type="GO" id="GO:0016706">
    <property type="term" value="F:2-oxoglutarate-dependent dioxygenase activity"/>
    <property type="evidence" value="ECO:0007669"/>
    <property type="project" value="UniProtKB-UniRule"/>
</dbReference>
<dbReference type="GO" id="GO:0005506">
    <property type="term" value="F:iron ion binding"/>
    <property type="evidence" value="ECO:0007669"/>
    <property type="project" value="UniProtKB-UniRule"/>
</dbReference>
<dbReference type="GO" id="GO:0031418">
    <property type="term" value="F:L-ascorbic acid binding"/>
    <property type="evidence" value="ECO:0007669"/>
    <property type="project" value="UniProtKB-KW"/>
</dbReference>
<dbReference type="GO" id="GO:0006974">
    <property type="term" value="P:DNA damage response"/>
    <property type="evidence" value="ECO:0007669"/>
    <property type="project" value="TreeGrafter"/>
</dbReference>
<dbReference type="GO" id="GO:0006879">
    <property type="term" value="P:intracellular iron ion homeostasis"/>
    <property type="evidence" value="ECO:0007669"/>
    <property type="project" value="TreeGrafter"/>
</dbReference>
<dbReference type="Gene3D" id="2.60.120.620">
    <property type="entry name" value="q2cbj1_9rhob like domain"/>
    <property type="match status" value="1"/>
</dbReference>
<dbReference type="Gene3D" id="4.10.860.20">
    <property type="entry name" value="Rabenosyn, Rab binding domain"/>
    <property type="match status" value="1"/>
</dbReference>
<dbReference type="HAMAP" id="MF_00657">
    <property type="entry name" value="Hydroxyl_YbiX"/>
    <property type="match status" value="1"/>
</dbReference>
<dbReference type="InterPro" id="IPR005123">
    <property type="entry name" value="Oxoglu/Fe-dep_dioxygenase_dom"/>
</dbReference>
<dbReference type="InterPro" id="IPR041097">
    <property type="entry name" value="PKHD_C"/>
</dbReference>
<dbReference type="InterPro" id="IPR023550">
    <property type="entry name" value="PKHD_hydroxylase"/>
</dbReference>
<dbReference type="InterPro" id="IPR006620">
    <property type="entry name" value="Pro_4_hyd_alph"/>
</dbReference>
<dbReference type="InterPro" id="IPR044862">
    <property type="entry name" value="Pro_4_hyd_alph_FE2OG_OXY"/>
</dbReference>
<dbReference type="NCBIfam" id="NF003974">
    <property type="entry name" value="PRK05467.1-3"/>
    <property type="match status" value="1"/>
</dbReference>
<dbReference type="NCBIfam" id="NF003975">
    <property type="entry name" value="PRK05467.1-4"/>
    <property type="match status" value="1"/>
</dbReference>
<dbReference type="PANTHER" id="PTHR41536">
    <property type="entry name" value="PKHD-TYPE HYDROXYLASE YBIX"/>
    <property type="match status" value="1"/>
</dbReference>
<dbReference type="PANTHER" id="PTHR41536:SF1">
    <property type="entry name" value="PKHD-TYPE HYDROXYLASE YBIX"/>
    <property type="match status" value="1"/>
</dbReference>
<dbReference type="Pfam" id="PF13640">
    <property type="entry name" value="2OG-FeII_Oxy_3"/>
    <property type="match status" value="1"/>
</dbReference>
<dbReference type="Pfam" id="PF18331">
    <property type="entry name" value="PKHD_C"/>
    <property type="match status" value="1"/>
</dbReference>
<dbReference type="SMART" id="SM00702">
    <property type="entry name" value="P4Hc"/>
    <property type="match status" value="1"/>
</dbReference>
<dbReference type="SUPFAM" id="SSF51197">
    <property type="entry name" value="Clavaminate synthase-like"/>
    <property type="match status" value="1"/>
</dbReference>
<dbReference type="PROSITE" id="PS51471">
    <property type="entry name" value="FE2OG_OXY"/>
    <property type="match status" value="1"/>
</dbReference>
<name>Y1638_XYLF2</name>
<organism>
    <name type="scientific">Xylella fastidiosa (strain M23)</name>
    <dbReference type="NCBI Taxonomy" id="405441"/>
    <lineage>
        <taxon>Bacteria</taxon>
        <taxon>Pseudomonadati</taxon>
        <taxon>Pseudomonadota</taxon>
        <taxon>Gammaproteobacteria</taxon>
        <taxon>Lysobacterales</taxon>
        <taxon>Lysobacteraceae</taxon>
        <taxon>Xylella</taxon>
    </lineage>
</organism>
<sequence length="230" mass="25875">MLLHIPTILSRTHATSMQERLAAANWTDGRETVGPQGAQVKHNLQLPETSPLRQELGQEILDALARSPLYFAATLPLRTLPPRFNRYQENHQYGFHVDGAVMSLPVAPDHTPASLRSDISCTLFLNDPDEYEGGELIIADTYGEHEVKLPAGDLIIYPSTSLHRVAPVTRGMRIASFFWVQSLVRQATHRHQLLELDTAIQSLTASNTDHNTILRLTNVYHNLLREWSET</sequence>
<protein>
    <recommendedName>
        <fullName evidence="1">PKHD-type hydroxylase XfasM23_1638</fullName>
        <ecNumber evidence="1">1.14.11.-</ecNumber>
    </recommendedName>
</protein>
<proteinExistence type="inferred from homology"/>
<feature type="chain" id="PRO_0000346535" description="PKHD-type hydroxylase XfasM23_1638">
    <location>
        <begin position="1"/>
        <end position="230"/>
    </location>
</feature>
<feature type="domain" description="Fe2OG dioxygenase" evidence="1">
    <location>
        <begin position="78"/>
        <end position="182"/>
    </location>
</feature>
<feature type="binding site" evidence="1">
    <location>
        <position position="96"/>
    </location>
    <ligand>
        <name>Fe cation</name>
        <dbReference type="ChEBI" id="CHEBI:24875"/>
    </ligand>
</feature>
<feature type="binding site" evidence="1">
    <location>
        <position position="98"/>
    </location>
    <ligand>
        <name>Fe cation</name>
        <dbReference type="ChEBI" id="CHEBI:24875"/>
    </ligand>
</feature>
<feature type="binding site" evidence="1">
    <location>
        <position position="163"/>
    </location>
    <ligand>
        <name>Fe cation</name>
        <dbReference type="ChEBI" id="CHEBI:24875"/>
    </ligand>
</feature>
<feature type="binding site" evidence="1">
    <location>
        <position position="173"/>
    </location>
    <ligand>
        <name>2-oxoglutarate</name>
        <dbReference type="ChEBI" id="CHEBI:16810"/>
    </ligand>
</feature>
<gene>
    <name type="ordered locus">XfasM23_1638</name>
</gene>
<accession>B2I7E8</accession>
<keyword id="KW-0223">Dioxygenase</keyword>
<keyword id="KW-0408">Iron</keyword>
<keyword id="KW-0479">Metal-binding</keyword>
<keyword id="KW-0560">Oxidoreductase</keyword>
<keyword id="KW-0847">Vitamin C</keyword>
<comment type="cofactor">
    <cofactor evidence="1">
        <name>Fe(2+)</name>
        <dbReference type="ChEBI" id="CHEBI:29033"/>
    </cofactor>
    <text evidence="1">Binds 1 Fe(2+) ion per subunit.</text>
</comment>
<comment type="cofactor">
    <cofactor evidence="1">
        <name>L-ascorbate</name>
        <dbReference type="ChEBI" id="CHEBI:38290"/>
    </cofactor>
</comment>
<reference key="1">
    <citation type="journal article" date="2010" name="J. Bacteriol.">
        <title>Whole genome sequences of two Xylella fastidiosa strains (M12 and M23) causing almond leaf scorch disease in California.</title>
        <authorList>
            <person name="Chen J."/>
            <person name="Xie G."/>
            <person name="Han S."/>
            <person name="Chertkov O."/>
            <person name="Sims D."/>
            <person name="Civerolo E.L."/>
        </authorList>
    </citation>
    <scope>NUCLEOTIDE SEQUENCE [LARGE SCALE GENOMIC DNA]</scope>
    <source>
        <strain>M23</strain>
    </source>
</reference>
<evidence type="ECO:0000255" key="1">
    <source>
        <dbReference type="HAMAP-Rule" id="MF_00657"/>
    </source>
</evidence>